<sequence>MDRYAVIGHPVEHSKSPLIHAAFAQQTGQQLEYGKVQAPLDGFVAIVTDLQEKGYRGVNVTVPFKFEAYSLATELTPRARDAGAVNTLTFTDGAIHGDNTDGVGLVRDILQNLAFTLAGKRVLLLGAGGAAEGVLAPLLEASPLSLCIANRTVDKAEAMAARVRPGQTSLDARGFDALADQEFDVVINATSSGLHNERLPLPSGLFAADALAYDMMYGRETPFMRYAREEGASRIADGLGMLVEQAAEAFYIWRRVRPDTAPVMAALRAA</sequence>
<reference key="1">
    <citation type="submission" date="2006-03" db="EMBL/GenBank/DDBJ databases">
        <title>Complete sequence of Methylobacillus flagellatus KT.</title>
        <authorList>
            <consortium name="US DOE Joint Genome Institute"/>
            <person name="Copeland A."/>
            <person name="Lucas S."/>
            <person name="Lapidus A."/>
            <person name="Barry K."/>
            <person name="Detter J.C."/>
            <person name="Glavina del Rio T."/>
            <person name="Hammon N."/>
            <person name="Israni S."/>
            <person name="Dalin E."/>
            <person name="Tice H."/>
            <person name="Pitluck S."/>
            <person name="Brettin T."/>
            <person name="Bruce D."/>
            <person name="Han C."/>
            <person name="Tapia R."/>
            <person name="Saunders E."/>
            <person name="Gilna P."/>
            <person name="Schmutz J."/>
            <person name="Larimer F."/>
            <person name="Land M."/>
            <person name="Kyrpides N."/>
            <person name="Anderson I."/>
            <person name="Richardson P."/>
        </authorList>
    </citation>
    <scope>NUCLEOTIDE SEQUENCE [LARGE SCALE GENOMIC DNA]</scope>
    <source>
        <strain>ATCC 51484 / DSM 6875 / VKM B-1610 / KT</strain>
    </source>
</reference>
<organism>
    <name type="scientific">Methylobacillus flagellatus (strain ATCC 51484 / DSM 6875 / VKM B-1610 / KT)</name>
    <dbReference type="NCBI Taxonomy" id="265072"/>
    <lineage>
        <taxon>Bacteria</taxon>
        <taxon>Pseudomonadati</taxon>
        <taxon>Pseudomonadota</taxon>
        <taxon>Betaproteobacteria</taxon>
        <taxon>Nitrosomonadales</taxon>
        <taxon>Methylophilaceae</taxon>
        <taxon>Methylobacillus</taxon>
    </lineage>
</organism>
<evidence type="ECO:0000255" key="1">
    <source>
        <dbReference type="HAMAP-Rule" id="MF_00222"/>
    </source>
</evidence>
<proteinExistence type="inferred from homology"/>
<dbReference type="EC" id="1.1.1.25" evidence="1"/>
<dbReference type="EMBL" id="CP000284">
    <property type="protein sequence ID" value="ABE50710.1"/>
    <property type="molecule type" value="Genomic_DNA"/>
</dbReference>
<dbReference type="RefSeq" id="WP_011480663.1">
    <property type="nucleotide sequence ID" value="NC_007947.1"/>
</dbReference>
<dbReference type="SMR" id="Q1GYH7"/>
<dbReference type="STRING" id="265072.Mfla_2445"/>
<dbReference type="KEGG" id="mfa:Mfla_2445"/>
<dbReference type="eggNOG" id="COG0169">
    <property type="taxonomic scope" value="Bacteria"/>
</dbReference>
<dbReference type="HOGENOM" id="CLU_044063_2_1_4"/>
<dbReference type="OrthoDB" id="9776868at2"/>
<dbReference type="UniPathway" id="UPA00053">
    <property type="reaction ID" value="UER00087"/>
</dbReference>
<dbReference type="Proteomes" id="UP000002440">
    <property type="component" value="Chromosome"/>
</dbReference>
<dbReference type="GO" id="GO:0005829">
    <property type="term" value="C:cytosol"/>
    <property type="evidence" value="ECO:0007669"/>
    <property type="project" value="TreeGrafter"/>
</dbReference>
<dbReference type="GO" id="GO:0050661">
    <property type="term" value="F:NADP binding"/>
    <property type="evidence" value="ECO:0007669"/>
    <property type="project" value="InterPro"/>
</dbReference>
<dbReference type="GO" id="GO:0004764">
    <property type="term" value="F:shikimate 3-dehydrogenase (NADP+) activity"/>
    <property type="evidence" value="ECO:0007669"/>
    <property type="project" value="UniProtKB-UniRule"/>
</dbReference>
<dbReference type="GO" id="GO:0008652">
    <property type="term" value="P:amino acid biosynthetic process"/>
    <property type="evidence" value="ECO:0007669"/>
    <property type="project" value="UniProtKB-KW"/>
</dbReference>
<dbReference type="GO" id="GO:0009073">
    <property type="term" value="P:aromatic amino acid family biosynthetic process"/>
    <property type="evidence" value="ECO:0007669"/>
    <property type="project" value="UniProtKB-KW"/>
</dbReference>
<dbReference type="GO" id="GO:0009423">
    <property type="term" value="P:chorismate biosynthetic process"/>
    <property type="evidence" value="ECO:0007669"/>
    <property type="project" value="UniProtKB-UniRule"/>
</dbReference>
<dbReference type="GO" id="GO:0019632">
    <property type="term" value="P:shikimate metabolic process"/>
    <property type="evidence" value="ECO:0007669"/>
    <property type="project" value="InterPro"/>
</dbReference>
<dbReference type="CDD" id="cd01065">
    <property type="entry name" value="NAD_bind_Shikimate_DH"/>
    <property type="match status" value="1"/>
</dbReference>
<dbReference type="FunFam" id="3.40.50.10860:FF:000006">
    <property type="entry name" value="Shikimate dehydrogenase (NADP(+))"/>
    <property type="match status" value="1"/>
</dbReference>
<dbReference type="Gene3D" id="3.40.50.10860">
    <property type="entry name" value="Leucine Dehydrogenase, chain A, domain 1"/>
    <property type="match status" value="1"/>
</dbReference>
<dbReference type="Gene3D" id="3.40.50.720">
    <property type="entry name" value="NAD(P)-binding Rossmann-like Domain"/>
    <property type="match status" value="1"/>
</dbReference>
<dbReference type="HAMAP" id="MF_00222">
    <property type="entry name" value="Shikimate_DH_AroE"/>
    <property type="match status" value="1"/>
</dbReference>
<dbReference type="InterPro" id="IPR046346">
    <property type="entry name" value="Aminoacid_DH-like_N_sf"/>
</dbReference>
<dbReference type="InterPro" id="IPR036291">
    <property type="entry name" value="NAD(P)-bd_dom_sf"/>
</dbReference>
<dbReference type="InterPro" id="IPR041121">
    <property type="entry name" value="SDH_C"/>
</dbReference>
<dbReference type="InterPro" id="IPR011342">
    <property type="entry name" value="Shikimate_DH"/>
</dbReference>
<dbReference type="InterPro" id="IPR013708">
    <property type="entry name" value="Shikimate_DH-bd_N"/>
</dbReference>
<dbReference type="InterPro" id="IPR022893">
    <property type="entry name" value="Shikimate_DH_fam"/>
</dbReference>
<dbReference type="InterPro" id="IPR006151">
    <property type="entry name" value="Shikm_DH/Glu-tRNA_Rdtase"/>
</dbReference>
<dbReference type="NCBIfam" id="TIGR00507">
    <property type="entry name" value="aroE"/>
    <property type="match status" value="1"/>
</dbReference>
<dbReference type="NCBIfam" id="NF001310">
    <property type="entry name" value="PRK00258.1-2"/>
    <property type="match status" value="1"/>
</dbReference>
<dbReference type="PANTHER" id="PTHR21089:SF1">
    <property type="entry name" value="BIFUNCTIONAL 3-DEHYDROQUINATE DEHYDRATASE_SHIKIMATE DEHYDROGENASE, CHLOROPLASTIC"/>
    <property type="match status" value="1"/>
</dbReference>
<dbReference type="PANTHER" id="PTHR21089">
    <property type="entry name" value="SHIKIMATE DEHYDROGENASE"/>
    <property type="match status" value="1"/>
</dbReference>
<dbReference type="Pfam" id="PF18317">
    <property type="entry name" value="SDH_C"/>
    <property type="match status" value="1"/>
</dbReference>
<dbReference type="Pfam" id="PF01488">
    <property type="entry name" value="Shikimate_DH"/>
    <property type="match status" value="1"/>
</dbReference>
<dbReference type="Pfam" id="PF08501">
    <property type="entry name" value="Shikimate_dh_N"/>
    <property type="match status" value="1"/>
</dbReference>
<dbReference type="SUPFAM" id="SSF53223">
    <property type="entry name" value="Aminoacid dehydrogenase-like, N-terminal domain"/>
    <property type="match status" value="1"/>
</dbReference>
<dbReference type="SUPFAM" id="SSF51735">
    <property type="entry name" value="NAD(P)-binding Rossmann-fold domains"/>
    <property type="match status" value="1"/>
</dbReference>
<accession>Q1GYH7</accession>
<comment type="function">
    <text evidence="1">Involved in the biosynthesis of the chorismate, which leads to the biosynthesis of aromatic amino acids. Catalyzes the reversible NADPH linked reduction of 3-dehydroshikimate (DHSA) to yield shikimate (SA).</text>
</comment>
<comment type="catalytic activity">
    <reaction evidence="1">
        <text>shikimate + NADP(+) = 3-dehydroshikimate + NADPH + H(+)</text>
        <dbReference type="Rhea" id="RHEA:17737"/>
        <dbReference type="ChEBI" id="CHEBI:15378"/>
        <dbReference type="ChEBI" id="CHEBI:16630"/>
        <dbReference type="ChEBI" id="CHEBI:36208"/>
        <dbReference type="ChEBI" id="CHEBI:57783"/>
        <dbReference type="ChEBI" id="CHEBI:58349"/>
        <dbReference type="EC" id="1.1.1.25"/>
    </reaction>
</comment>
<comment type="pathway">
    <text evidence="1">Metabolic intermediate biosynthesis; chorismate biosynthesis; chorismate from D-erythrose 4-phosphate and phosphoenolpyruvate: step 4/7.</text>
</comment>
<comment type="subunit">
    <text evidence="1">Homodimer.</text>
</comment>
<comment type="similarity">
    <text evidence="1">Belongs to the shikimate dehydrogenase family.</text>
</comment>
<protein>
    <recommendedName>
        <fullName evidence="1">Shikimate dehydrogenase (NADP(+))</fullName>
        <shortName evidence="1">SDH</shortName>
        <ecNumber evidence="1">1.1.1.25</ecNumber>
    </recommendedName>
</protein>
<feature type="chain" id="PRO_1000021303" description="Shikimate dehydrogenase (NADP(+))">
    <location>
        <begin position="1"/>
        <end position="270"/>
    </location>
</feature>
<feature type="active site" description="Proton acceptor" evidence="1">
    <location>
        <position position="65"/>
    </location>
</feature>
<feature type="binding site" evidence="1">
    <location>
        <begin position="14"/>
        <end position="16"/>
    </location>
    <ligand>
        <name>shikimate</name>
        <dbReference type="ChEBI" id="CHEBI:36208"/>
    </ligand>
</feature>
<feature type="binding site" evidence="1">
    <location>
        <position position="61"/>
    </location>
    <ligand>
        <name>shikimate</name>
        <dbReference type="ChEBI" id="CHEBI:36208"/>
    </ligand>
</feature>
<feature type="binding site" evidence="1">
    <location>
        <position position="86"/>
    </location>
    <ligand>
        <name>shikimate</name>
        <dbReference type="ChEBI" id="CHEBI:36208"/>
    </ligand>
</feature>
<feature type="binding site" evidence="1">
    <location>
        <position position="101"/>
    </location>
    <ligand>
        <name>shikimate</name>
        <dbReference type="ChEBI" id="CHEBI:36208"/>
    </ligand>
</feature>
<feature type="binding site" evidence="1">
    <location>
        <begin position="126"/>
        <end position="130"/>
    </location>
    <ligand>
        <name>NADP(+)</name>
        <dbReference type="ChEBI" id="CHEBI:58349"/>
    </ligand>
</feature>
<feature type="binding site" evidence="1">
    <location>
        <begin position="150"/>
        <end position="155"/>
    </location>
    <ligand>
        <name>NADP(+)</name>
        <dbReference type="ChEBI" id="CHEBI:58349"/>
    </ligand>
</feature>
<feature type="binding site" evidence="1">
    <location>
        <position position="215"/>
    </location>
    <ligand>
        <name>NADP(+)</name>
        <dbReference type="ChEBI" id="CHEBI:58349"/>
    </ligand>
</feature>
<feature type="binding site" evidence="1">
    <location>
        <position position="217"/>
    </location>
    <ligand>
        <name>shikimate</name>
        <dbReference type="ChEBI" id="CHEBI:36208"/>
    </ligand>
</feature>
<feature type="binding site" evidence="1">
    <location>
        <position position="238"/>
    </location>
    <ligand>
        <name>NADP(+)</name>
        <dbReference type="ChEBI" id="CHEBI:58349"/>
    </ligand>
</feature>
<keyword id="KW-0028">Amino-acid biosynthesis</keyword>
<keyword id="KW-0057">Aromatic amino acid biosynthesis</keyword>
<keyword id="KW-0521">NADP</keyword>
<keyword id="KW-0560">Oxidoreductase</keyword>
<keyword id="KW-1185">Reference proteome</keyword>
<gene>
    <name evidence="1" type="primary">aroE</name>
    <name type="ordered locus">Mfla_2445</name>
</gene>
<name>AROE_METFK</name>